<feature type="chain" id="PRO_0000412017" description="Casparian strip membrane protein 3">
    <location>
        <begin position="1"/>
        <end position="184"/>
    </location>
</feature>
<feature type="topological domain" description="Cytoplasmic" evidence="2">
    <location>
        <begin position="1"/>
        <end position="24"/>
    </location>
</feature>
<feature type="transmembrane region" description="Helical" evidence="2">
    <location>
        <begin position="25"/>
        <end position="45"/>
    </location>
</feature>
<feature type="topological domain" description="Extracellular" evidence="2">
    <location>
        <begin position="46"/>
        <end position="72"/>
    </location>
</feature>
<feature type="transmembrane region" description="Helical" evidence="2">
    <location>
        <begin position="73"/>
        <end position="93"/>
    </location>
</feature>
<feature type="topological domain" description="Cytoplasmic" evidence="2">
    <location>
        <begin position="94"/>
        <end position="105"/>
    </location>
</feature>
<feature type="transmembrane region" description="Helical" evidence="2">
    <location>
        <begin position="106"/>
        <end position="126"/>
    </location>
</feature>
<feature type="topological domain" description="Extracellular" evidence="2">
    <location>
        <begin position="127"/>
        <end position="159"/>
    </location>
</feature>
<feature type="transmembrane region" description="Helical" evidence="2">
    <location>
        <begin position="160"/>
        <end position="180"/>
    </location>
</feature>
<feature type="topological domain" description="Cytoplasmic" evidence="2">
    <location>
        <begin position="181"/>
        <end position="184"/>
    </location>
</feature>
<feature type="glycosylation site" description="N-linked (GlcNAc...) asparagine" evidence="2">
    <location>
        <position position="49"/>
    </location>
</feature>
<dbReference type="EMBL" id="CM000131">
    <property type="protein sequence ID" value="EAZ00252.1"/>
    <property type="molecule type" value="Genomic_DNA"/>
</dbReference>
<dbReference type="EMBL" id="CT862952">
    <property type="status" value="NOT_ANNOTATED_CDS"/>
    <property type="molecule type" value="mRNA"/>
</dbReference>
<dbReference type="SMR" id="A2YAZ1"/>
<dbReference type="STRING" id="39946.A2YAZ1"/>
<dbReference type="EnsemblPlants" id="BGIOSGA022588-TA">
    <property type="protein sequence ID" value="BGIOSGA022588-PA"/>
    <property type="gene ID" value="BGIOSGA022588"/>
</dbReference>
<dbReference type="EnsemblPlants" id="OsKYG_06g0008730.01">
    <property type="protein sequence ID" value="OsKYG_06g0008730.01"/>
    <property type="gene ID" value="OsKYG_06g0008730"/>
</dbReference>
<dbReference type="EnsemblPlants" id="OsPr106_06g0008840.01">
    <property type="protein sequence ID" value="OsPr106_06g0008840.01"/>
    <property type="gene ID" value="OsPr106_06g0008840"/>
</dbReference>
<dbReference type="Gramene" id="BGIOSGA022588-TA">
    <property type="protein sequence ID" value="BGIOSGA022588-PA"/>
    <property type="gene ID" value="BGIOSGA022588"/>
</dbReference>
<dbReference type="Gramene" id="OsKYG_06g0008730.01">
    <property type="protein sequence ID" value="OsKYG_06g0008730.01"/>
    <property type="gene ID" value="OsKYG_06g0008730"/>
</dbReference>
<dbReference type="Gramene" id="OsPr106_06g0008840.01">
    <property type="protein sequence ID" value="OsPr106_06g0008840.01"/>
    <property type="gene ID" value="OsPr106_06g0008840"/>
</dbReference>
<dbReference type="HOGENOM" id="CLU_066104_3_2_1"/>
<dbReference type="OMA" id="ANWLSIC"/>
<dbReference type="Proteomes" id="UP000007015">
    <property type="component" value="Chromosome 6"/>
</dbReference>
<dbReference type="GO" id="GO:0005886">
    <property type="term" value="C:plasma membrane"/>
    <property type="evidence" value="ECO:0007669"/>
    <property type="project" value="UniProtKB-SubCell"/>
</dbReference>
<dbReference type="GO" id="GO:0071555">
    <property type="term" value="P:cell wall organization"/>
    <property type="evidence" value="ECO:0007669"/>
    <property type="project" value="UniProtKB-KW"/>
</dbReference>
<dbReference type="InterPro" id="IPR006459">
    <property type="entry name" value="CASP/CASPL"/>
</dbReference>
<dbReference type="InterPro" id="IPR006702">
    <property type="entry name" value="CASP_dom"/>
</dbReference>
<dbReference type="InterPro" id="IPR044173">
    <property type="entry name" value="CASPL"/>
</dbReference>
<dbReference type="NCBIfam" id="TIGR01569">
    <property type="entry name" value="A_tha_TIGR01569"/>
    <property type="match status" value="1"/>
</dbReference>
<dbReference type="PANTHER" id="PTHR36488:SF12">
    <property type="entry name" value="CASP-LIKE PROTEIN"/>
    <property type="match status" value="1"/>
</dbReference>
<dbReference type="PANTHER" id="PTHR36488">
    <property type="entry name" value="CASP-LIKE PROTEIN 1U1"/>
    <property type="match status" value="1"/>
</dbReference>
<dbReference type="Pfam" id="PF04535">
    <property type="entry name" value="CASP_dom"/>
    <property type="match status" value="1"/>
</dbReference>
<protein>
    <recommendedName>
        <fullName>Casparian strip membrane protein 3</fullName>
        <shortName>OsCASP3</shortName>
    </recommendedName>
</protein>
<comment type="function">
    <text evidence="1">Regulates membrane-cell wall junctions and localized cell wall deposition. Required for establishment of the Casparian strip membrane domain (CSD) and the subsequent formation of Casparian strips, a cell wall modification of the root endodermis that determines an apoplastic barrier between the intraorganismal apoplasm and the extraorganismal apoplasm and prevents lateral diffusion (By similarity).</text>
</comment>
<comment type="subunit">
    <text evidence="1">Homodimer and heterodimers.</text>
</comment>
<comment type="subcellular location">
    <subcellularLocation>
        <location evidence="1">Cell membrane</location>
        <topology evidence="1">Multi-pass membrane protein</topology>
    </subcellularLocation>
    <text evidence="1">Very restricted localization following a belt shape within the plasma membrane which coincides with the position of the Casparian strip membrane domain in the root endodermis.</text>
</comment>
<comment type="similarity">
    <text evidence="3">Belongs to the Casparian strip membrane proteins (CASP) family.</text>
</comment>
<keyword id="KW-1003">Cell membrane</keyword>
<keyword id="KW-0961">Cell wall biogenesis/degradation</keyword>
<keyword id="KW-0325">Glycoprotein</keyword>
<keyword id="KW-0472">Membrane</keyword>
<keyword id="KW-1185">Reference proteome</keyword>
<keyword id="KW-0812">Transmembrane</keyword>
<keyword id="KW-1133">Transmembrane helix</keyword>
<gene>
    <name type="ORF">OsI_22263</name>
</gene>
<organism>
    <name type="scientific">Oryza sativa subsp. indica</name>
    <name type="common">Rice</name>
    <dbReference type="NCBI Taxonomy" id="39946"/>
    <lineage>
        <taxon>Eukaryota</taxon>
        <taxon>Viridiplantae</taxon>
        <taxon>Streptophyta</taxon>
        <taxon>Embryophyta</taxon>
        <taxon>Tracheophyta</taxon>
        <taxon>Spermatophyta</taxon>
        <taxon>Magnoliopsida</taxon>
        <taxon>Liliopsida</taxon>
        <taxon>Poales</taxon>
        <taxon>Poaceae</taxon>
        <taxon>BOP clade</taxon>
        <taxon>Oryzoideae</taxon>
        <taxon>Oryzeae</taxon>
        <taxon>Oryzinae</taxon>
        <taxon>Oryza</taxon>
        <taxon>Oryza sativa</taxon>
    </lineage>
</organism>
<reference key="1">
    <citation type="journal article" date="2005" name="PLoS Biol.">
        <title>The genomes of Oryza sativa: a history of duplications.</title>
        <authorList>
            <person name="Yu J."/>
            <person name="Wang J."/>
            <person name="Lin W."/>
            <person name="Li S."/>
            <person name="Li H."/>
            <person name="Zhou J."/>
            <person name="Ni P."/>
            <person name="Dong W."/>
            <person name="Hu S."/>
            <person name="Zeng C."/>
            <person name="Zhang J."/>
            <person name="Zhang Y."/>
            <person name="Li R."/>
            <person name="Xu Z."/>
            <person name="Li S."/>
            <person name="Li X."/>
            <person name="Zheng H."/>
            <person name="Cong L."/>
            <person name="Lin L."/>
            <person name="Yin J."/>
            <person name="Geng J."/>
            <person name="Li G."/>
            <person name="Shi J."/>
            <person name="Liu J."/>
            <person name="Lv H."/>
            <person name="Li J."/>
            <person name="Wang J."/>
            <person name="Deng Y."/>
            <person name="Ran L."/>
            <person name="Shi X."/>
            <person name="Wang X."/>
            <person name="Wu Q."/>
            <person name="Li C."/>
            <person name="Ren X."/>
            <person name="Wang J."/>
            <person name="Wang X."/>
            <person name="Li D."/>
            <person name="Liu D."/>
            <person name="Zhang X."/>
            <person name="Ji Z."/>
            <person name="Zhao W."/>
            <person name="Sun Y."/>
            <person name="Zhang Z."/>
            <person name="Bao J."/>
            <person name="Han Y."/>
            <person name="Dong L."/>
            <person name="Ji J."/>
            <person name="Chen P."/>
            <person name="Wu S."/>
            <person name="Liu J."/>
            <person name="Xiao Y."/>
            <person name="Bu D."/>
            <person name="Tan J."/>
            <person name="Yang L."/>
            <person name="Ye C."/>
            <person name="Zhang J."/>
            <person name="Xu J."/>
            <person name="Zhou Y."/>
            <person name="Yu Y."/>
            <person name="Zhang B."/>
            <person name="Zhuang S."/>
            <person name="Wei H."/>
            <person name="Liu B."/>
            <person name="Lei M."/>
            <person name="Yu H."/>
            <person name="Li Y."/>
            <person name="Xu H."/>
            <person name="Wei S."/>
            <person name="He X."/>
            <person name="Fang L."/>
            <person name="Zhang Z."/>
            <person name="Zhang Y."/>
            <person name="Huang X."/>
            <person name="Su Z."/>
            <person name="Tong W."/>
            <person name="Li J."/>
            <person name="Tong Z."/>
            <person name="Li S."/>
            <person name="Ye J."/>
            <person name="Wang L."/>
            <person name="Fang L."/>
            <person name="Lei T."/>
            <person name="Chen C.-S."/>
            <person name="Chen H.-C."/>
            <person name="Xu Z."/>
            <person name="Li H."/>
            <person name="Huang H."/>
            <person name="Zhang F."/>
            <person name="Xu H."/>
            <person name="Li N."/>
            <person name="Zhao C."/>
            <person name="Li S."/>
            <person name="Dong L."/>
            <person name="Huang Y."/>
            <person name="Li L."/>
            <person name="Xi Y."/>
            <person name="Qi Q."/>
            <person name="Li W."/>
            <person name="Zhang B."/>
            <person name="Hu W."/>
            <person name="Zhang Y."/>
            <person name="Tian X."/>
            <person name="Jiao Y."/>
            <person name="Liang X."/>
            <person name="Jin J."/>
            <person name="Gao L."/>
            <person name="Zheng W."/>
            <person name="Hao B."/>
            <person name="Liu S.-M."/>
            <person name="Wang W."/>
            <person name="Yuan L."/>
            <person name="Cao M."/>
            <person name="McDermott J."/>
            <person name="Samudrala R."/>
            <person name="Wang J."/>
            <person name="Wong G.K.-S."/>
            <person name="Yang H."/>
        </authorList>
    </citation>
    <scope>NUCLEOTIDE SEQUENCE [LARGE SCALE GENOMIC DNA]</scope>
    <source>
        <strain>cv. 93-11</strain>
    </source>
</reference>
<reference key="2">
    <citation type="journal article" date="2007" name="Plant Mol. Biol.">
        <title>A collection of 10,096 indica rice full-length cDNAs reveals highly expressed sequence divergence between Oryza sativa indica and japonica subspecies.</title>
        <authorList>
            <person name="Liu X."/>
            <person name="Lu T."/>
            <person name="Yu S."/>
            <person name="Li Y."/>
            <person name="Huang Y."/>
            <person name="Huang T."/>
            <person name="Zhang L."/>
            <person name="Zhu J."/>
            <person name="Zhao Q."/>
            <person name="Fan D."/>
            <person name="Mu J."/>
            <person name="Shangguan Y."/>
            <person name="Feng Q."/>
            <person name="Guan J."/>
            <person name="Ying K."/>
            <person name="Zhang Y."/>
            <person name="Lin Z."/>
            <person name="Sun Z."/>
            <person name="Qian Q."/>
            <person name="Lu Y."/>
            <person name="Han B."/>
        </authorList>
    </citation>
    <scope>NUCLEOTIDE SEQUENCE [LARGE SCALE MRNA]</scope>
    <source>
        <strain>cv. Guang-Lu-Ai No.4</strain>
    </source>
</reference>
<reference key="3">
    <citation type="journal article" date="2014" name="Plant Physiol.">
        <title>Functional and evolutionary analysis of the CASPARIAN STRIP MEMBRANE DOMAIN PROTEIN family.</title>
        <authorList>
            <person name="Roppolo D."/>
            <person name="Boeckmann B."/>
            <person name="Pfister A."/>
            <person name="Boutet E."/>
            <person name="Rubio M.C."/>
            <person name="Denervaud-Tendon V."/>
            <person name="Vermeer J.E."/>
            <person name="Gheyselinck J."/>
            <person name="Xenarios I."/>
            <person name="Geldner N."/>
        </authorList>
    </citation>
    <scope>GENE FAMILY</scope>
    <scope>NOMENCLATURE</scope>
</reference>
<sequence length="184" mass="19788">MEGSEEHGETSKAPLSRGVSKGVSILDVILRFVAIIGTLASAIAMGTTNQTLPFFTQFIRFKAQYSDLPTLTFFVVANSIVSAYLILSLPLSIVHVIRSRAKYSRLILIFFDAAMLALVTAGASAAAAIVYLAHKGNARANWLAICQQFDSFCERISGSLIGSFAAMVVLVLLIFLSAIALARR</sequence>
<evidence type="ECO:0000250" key="1"/>
<evidence type="ECO:0000255" key="2"/>
<evidence type="ECO:0000305" key="3"/>
<proteinExistence type="evidence at transcript level"/>
<name>CASP3_ORYSI</name>
<accession>A2YAZ1</accession>